<comment type="function">
    <text evidence="1">Cell wall formation. Catalyzes the addition of glutamate to the nucleotide precursor UDP-N-acetylmuramoyl-L-alanine (UMA).</text>
</comment>
<comment type="catalytic activity">
    <reaction evidence="1">
        <text>UDP-N-acetyl-alpha-D-muramoyl-L-alanine + D-glutamate + ATP = UDP-N-acetyl-alpha-D-muramoyl-L-alanyl-D-glutamate + ADP + phosphate + H(+)</text>
        <dbReference type="Rhea" id="RHEA:16429"/>
        <dbReference type="ChEBI" id="CHEBI:15378"/>
        <dbReference type="ChEBI" id="CHEBI:29986"/>
        <dbReference type="ChEBI" id="CHEBI:30616"/>
        <dbReference type="ChEBI" id="CHEBI:43474"/>
        <dbReference type="ChEBI" id="CHEBI:83898"/>
        <dbReference type="ChEBI" id="CHEBI:83900"/>
        <dbReference type="ChEBI" id="CHEBI:456216"/>
        <dbReference type="EC" id="6.3.2.9"/>
    </reaction>
</comment>
<comment type="pathway">
    <text evidence="1">Cell wall biogenesis; peptidoglycan biosynthesis.</text>
</comment>
<comment type="subcellular location">
    <subcellularLocation>
        <location evidence="1">Cytoplasm</location>
    </subcellularLocation>
</comment>
<comment type="similarity">
    <text evidence="1">Belongs to the MurCDEF family.</text>
</comment>
<reference key="1">
    <citation type="journal article" date="2007" name="J. Bacteriol.">
        <title>Complete genome of acute rheumatic fever-associated serotype M5 Streptococcus pyogenes strain Manfredo.</title>
        <authorList>
            <person name="Holden M.T.G."/>
            <person name="Scott A."/>
            <person name="Cherevach I."/>
            <person name="Chillingworth T."/>
            <person name="Churcher C."/>
            <person name="Cronin A."/>
            <person name="Dowd L."/>
            <person name="Feltwell T."/>
            <person name="Hamlin N."/>
            <person name="Holroyd S."/>
            <person name="Jagels K."/>
            <person name="Moule S."/>
            <person name="Mungall K."/>
            <person name="Quail M.A."/>
            <person name="Price C."/>
            <person name="Rabbinowitsch E."/>
            <person name="Sharp S."/>
            <person name="Skelton J."/>
            <person name="Whitehead S."/>
            <person name="Barrell B.G."/>
            <person name="Kehoe M."/>
            <person name="Parkhill J."/>
        </authorList>
    </citation>
    <scope>NUCLEOTIDE SEQUENCE [LARGE SCALE GENOMIC DNA]</scope>
    <source>
        <strain>Manfredo</strain>
    </source>
</reference>
<keyword id="KW-0067">ATP-binding</keyword>
<keyword id="KW-0131">Cell cycle</keyword>
<keyword id="KW-0132">Cell division</keyword>
<keyword id="KW-0133">Cell shape</keyword>
<keyword id="KW-0961">Cell wall biogenesis/degradation</keyword>
<keyword id="KW-0963">Cytoplasm</keyword>
<keyword id="KW-0436">Ligase</keyword>
<keyword id="KW-0547">Nucleotide-binding</keyword>
<keyword id="KW-0573">Peptidoglycan synthesis</keyword>
<organism>
    <name type="scientific">Streptococcus pyogenes serotype M5 (strain Manfredo)</name>
    <dbReference type="NCBI Taxonomy" id="160491"/>
    <lineage>
        <taxon>Bacteria</taxon>
        <taxon>Bacillati</taxon>
        <taxon>Bacillota</taxon>
        <taxon>Bacilli</taxon>
        <taxon>Lactobacillales</taxon>
        <taxon>Streptococcaceae</taxon>
        <taxon>Streptococcus</taxon>
    </lineage>
</organism>
<dbReference type="EC" id="6.3.2.9" evidence="1"/>
<dbReference type="EMBL" id="AM295007">
    <property type="protein sequence ID" value="CAM29934.1"/>
    <property type="molecule type" value="Genomic_DNA"/>
</dbReference>
<dbReference type="RefSeq" id="WP_011888734.1">
    <property type="nucleotide sequence ID" value="NC_009332.1"/>
</dbReference>
<dbReference type="SMR" id="A2RDK9"/>
<dbReference type="KEGG" id="spf:SpyM50599"/>
<dbReference type="HOGENOM" id="CLU_032540_0_1_9"/>
<dbReference type="UniPathway" id="UPA00219"/>
<dbReference type="GO" id="GO:0005737">
    <property type="term" value="C:cytoplasm"/>
    <property type="evidence" value="ECO:0007669"/>
    <property type="project" value="UniProtKB-SubCell"/>
</dbReference>
<dbReference type="GO" id="GO:0005524">
    <property type="term" value="F:ATP binding"/>
    <property type="evidence" value="ECO:0007669"/>
    <property type="project" value="UniProtKB-UniRule"/>
</dbReference>
<dbReference type="GO" id="GO:0008764">
    <property type="term" value="F:UDP-N-acetylmuramoylalanine-D-glutamate ligase activity"/>
    <property type="evidence" value="ECO:0007669"/>
    <property type="project" value="UniProtKB-UniRule"/>
</dbReference>
<dbReference type="GO" id="GO:0051301">
    <property type="term" value="P:cell division"/>
    <property type="evidence" value="ECO:0007669"/>
    <property type="project" value="UniProtKB-KW"/>
</dbReference>
<dbReference type="GO" id="GO:0071555">
    <property type="term" value="P:cell wall organization"/>
    <property type="evidence" value="ECO:0007669"/>
    <property type="project" value="UniProtKB-KW"/>
</dbReference>
<dbReference type="GO" id="GO:0009252">
    <property type="term" value="P:peptidoglycan biosynthetic process"/>
    <property type="evidence" value="ECO:0007669"/>
    <property type="project" value="UniProtKB-UniRule"/>
</dbReference>
<dbReference type="GO" id="GO:0008360">
    <property type="term" value="P:regulation of cell shape"/>
    <property type="evidence" value="ECO:0007669"/>
    <property type="project" value="UniProtKB-KW"/>
</dbReference>
<dbReference type="Gene3D" id="3.90.190.20">
    <property type="entry name" value="Mur ligase, C-terminal domain"/>
    <property type="match status" value="1"/>
</dbReference>
<dbReference type="Gene3D" id="3.40.1190.10">
    <property type="entry name" value="Mur-like, catalytic domain"/>
    <property type="match status" value="1"/>
</dbReference>
<dbReference type="Gene3D" id="3.40.50.720">
    <property type="entry name" value="NAD(P)-binding Rossmann-like Domain"/>
    <property type="match status" value="1"/>
</dbReference>
<dbReference type="HAMAP" id="MF_00639">
    <property type="entry name" value="MurD"/>
    <property type="match status" value="1"/>
</dbReference>
<dbReference type="InterPro" id="IPR036565">
    <property type="entry name" value="Mur-like_cat_sf"/>
</dbReference>
<dbReference type="InterPro" id="IPR004101">
    <property type="entry name" value="Mur_ligase_C"/>
</dbReference>
<dbReference type="InterPro" id="IPR036615">
    <property type="entry name" value="Mur_ligase_C_dom_sf"/>
</dbReference>
<dbReference type="InterPro" id="IPR013221">
    <property type="entry name" value="Mur_ligase_cen"/>
</dbReference>
<dbReference type="InterPro" id="IPR005762">
    <property type="entry name" value="MurD"/>
</dbReference>
<dbReference type="NCBIfam" id="TIGR01087">
    <property type="entry name" value="murD"/>
    <property type="match status" value="1"/>
</dbReference>
<dbReference type="PANTHER" id="PTHR43692">
    <property type="entry name" value="UDP-N-ACETYLMURAMOYLALANINE--D-GLUTAMATE LIGASE"/>
    <property type="match status" value="1"/>
</dbReference>
<dbReference type="PANTHER" id="PTHR43692:SF1">
    <property type="entry name" value="UDP-N-ACETYLMURAMOYLALANINE--D-GLUTAMATE LIGASE"/>
    <property type="match status" value="1"/>
</dbReference>
<dbReference type="Pfam" id="PF02875">
    <property type="entry name" value="Mur_ligase_C"/>
    <property type="match status" value="1"/>
</dbReference>
<dbReference type="Pfam" id="PF08245">
    <property type="entry name" value="Mur_ligase_M"/>
    <property type="match status" value="1"/>
</dbReference>
<dbReference type="Pfam" id="PF21799">
    <property type="entry name" value="MurD-like_N"/>
    <property type="match status" value="1"/>
</dbReference>
<dbReference type="SUPFAM" id="SSF51984">
    <property type="entry name" value="MurCD N-terminal domain"/>
    <property type="match status" value="1"/>
</dbReference>
<dbReference type="SUPFAM" id="SSF53623">
    <property type="entry name" value="MurD-like peptide ligases, catalytic domain"/>
    <property type="match status" value="1"/>
</dbReference>
<dbReference type="SUPFAM" id="SSF53244">
    <property type="entry name" value="MurD-like peptide ligases, peptide-binding domain"/>
    <property type="match status" value="1"/>
</dbReference>
<name>MURD_STRPG</name>
<accession>A2RDK9</accession>
<feature type="chain" id="PRO_0000301451" description="UDP-N-acetylmuramoylalanine--D-glutamate ligase">
    <location>
        <begin position="1"/>
        <end position="452"/>
    </location>
</feature>
<feature type="binding site" evidence="1">
    <location>
        <begin position="119"/>
        <end position="125"/>
    </location>
    <ligand>
        <name>ATP</name>
        <dbReference type="ChEBI" id="CHEBI:30616"/>
    </ligand>
</feature>
<evidence type="ECO:0000255" key="1">
    <source>
        <dbReference type="HAMAP-Rule" id="MF_00639"/>
    </source>
</evidence>
<gene>
    <name evidence="1" type="primary">murD</name>
    <name type="ordered locus">SpyM50599</name>
</gene>
<protein>
    <recommendedName>
        <fullName evidence="1">UDP-N-acetylmuramoylalanine--D-glutamate ligase</fullName>
        <ecNumber evidence="1">6.3.2.9</ecNumber>
    </recommendedName>
    <alternativeName>
        <fullName evidence="1">D-glutamic acid-adding enzyme</fullName>
    </alternativeName>
    <alternativeName>
        <fullName evidence="1">UDP-N-acetylmuramoyl-L-alanyl-D-glutamate synthetase</fullName>
    </alternativeName>
</protein>
<proteinExistence type="inferred from homology"/>
<sequence length="452" mass="48713">MKVISNFQNKKILILGLAKSGEAAAKLLTKLGALVTVNDSKPFDQNPAAQALLEEGIKVICGSHPVELLDENFEYMVKNPGIPYDNPMVKRALAKEIPLLTEVELAYFVSEAPIIGITGSNGKTTTTTMIADVLNAGGQSALLSGNIGYPASKVVQKAIAGDTLVMELSSFQLVGVNAFRPHIAVITNLMPTHLDYHGSFEDYVAAKWMIQAQMTESDYLILNANQEISATLAKTTKATVIPFSTQKVVDGAYLNDGILYFKEQAIIAATDLGVPGSHNIENALATIAVAKLSGIADDIIAQCLSHFGGVKHRLQRVGQIKDITFYNDSKSTNILATQKALSGFDNSRLILIAGGLDRGNEFDDLVPDLLGLKQMIILGESAERMKRAANKAEVSYLEARNVAEATELAFKLAQTGDTILLSPANASWDMYPNFEVRGDEFLATFDCLRGDA</sequence>